<dbReference type="EC" id="2.7.7.7"/>
<dbReference type="EMBL" id="AB211532">
    <property type="protein sequence ID" value="BAE10873.1"/>
    <property type="molecule type" value="mRNA"/>
</dbReference>
<dbReference type="EMBL" id="AC079284">
    <property type="protein sequence ID" value="AAG50942.1"/>
    <property type="status" value="ALT_SEQ"/>
    <property type="molecule type" value="Genomic_DNA"/>
</dbReference>
<dbReference type="EMBL" id="CP002684">
    <property type="protein sequence ID" value="AEE32595.1"/>
    <property type="molecule type" value="Genomic_DNA"/>
</dbReference>
<dbReference type="EMBL" id="AF462826">
    <property type="protein sequence ID" value="AAL58915.1"/>
    <property type="molecule type" value="mRNA"/>
</dbReference>
<dbReference type="EMBL" id="AY091072">
    <property type="protein sequence ID" value="AAM13892.1"/>
    <property type="molecule type" value="mRNA"/>
</dbReference>
<dbReference type="PIR" id="D96545">
    <property type="entry name" value="D96545"/>
</dbReference>
<dbReference type="RefSeq" id="NP_175498.2">
    <property type="nucleotide sequence ID" value="NM_103965.5"/>
</dbReference>
<dbReference type="SMR" id="F4I6M1"/>
<dbReference type="BioGRID" id="26731">
    <property type="interactions" value="1"/>
</dbReference>
<dbReference type="FunCoup" id="F4I6M1">
    <property type="interactions" value="271"/>
</dbReference>
<dbReference type="STRING" id="3702.F4I6M1"/>
<dbReference type="PaxDb" id="3702-AT1G50840.1"/>
<dbReference type="EnsemblPlants" id="AT1G50840.1">
    <property type="protein sequence ID" value="AT1G50840.1"/>
    <property type="gene ID" value="AT1G50840"/>
</dbReference>
<dbReference type="GeneID" id="841506"/>
<dbReference type="Gramene" id="AT1G50840.1">
    <property type="protein sequence ID" value="AT1G50840.1"/>
    <property type="gene ID" value="AT1G50840"/>
</dbReference>
<dbReference type="KEGG" id="ath:AT1G50840"/>
<dbReference type="Araport" id="AT1G50840"/>
<dbReference type="TAIR" id="AT1G50840">
    <property type="gene designation" value="POLGAMMA2"/>
</dbReference>
<dbReference type="eggNOG" id="KOG0950">
    <property type="taxonomic scope" value="Eukaryota"/>
</dbReference>
<dbReference type="HOGENOM" id="CLU_004638_0_0_1"/>
<dbReference type="InParanoid" id="F4I6M1"/>
<dbReference type="BRENDA" id="4.2.99.B1">
    <property type="organism ID" value="399"/>
</dbReference>
<dbReference type="PRO" id="PR:F4I6M1"/>
<dbReference type="Proteomes" id="UP000006548">
    <property type="component" value="Chromosome 1"/>
</dbReference>
<dbReference type="ExpressionAtlas" id="F4I6M1">
    <property type="expression patterns" value="baseline and differential"/>
</dbReference>
<dbReference type="GO" id="GO:0009507">
    <property type="term" value="C:chloroplast"/>
    <property type="evidence" value="ECO:0000314"/>
    <property type="project" value="TAIR"/>
</dbReference>
<dbReference type="GO" id="GO:0005739">
    <property type="term" value="C:mitochondrion"/>
    <property type="evidence" value="ECO:0000314"/>
    <property type="project" value="TAIR"/>
</dbReference>
<dbReference type="GO" id="GO:0008408">
    <property type="term" value="F:3'-5' exonuclease activity"/>
    <property type="evidence" value="ECO:0007669"/>
    <property type="project" value="InterPro"/>
</dbReference>
<dbReference type="GO" id="GO:0003677">
    <property type="term" value="F:DNA binding"/>
    <property type="evidence" value="ECO:0007669"/>
    <property type="project" value="UniProtKB-KW"/>
</dbReference>
<dbReference type="GO" id="GO:0003887">
    <property type="term" value="F:DNA-directed DNA polymerase activity"/>
    <property type="evidence" value="ECO:0000304"/>
    <property type="project" value="TAIR"/>
</dbReference>
<dbReference type="GO" id="GO:0006281">
    <property type="term" value="P:DNA repair"/>
    <property type="evidence" value="ECO:0007669"/>
    <property type="project" value="UniProtKB-KW"/>
</dbReference>
<dbReference type="GO" id="GO:0006264">
    <property type="term" value="P:mitochondrial DNA replication"/>
    <property type="evidence" value="ECO:0000315"/>
    <property type="project" value="TAIR"/>
</dbReference>
<dbReference type="GO" id="GO:0033259">
    <property type="term" value="P:plastid DNA replication"/>
    <property type="evidence" value="ECO:0000315"/>
    <property type="project" value="TAIR"/>
</dbReference>
<dbReference type="CDD" id="cd08640">
    <property type="entry name" value="DNA_pol_A_plastid_like"/>
    <property type="match status" value="1"/>
</dbReference>
<dbReference type="CDD" id="cd06139">
    <property type="entry name" value="DNA_polA_I_Ecoli_like_exo"/>
    <property type="match status" value="1"/>
</dbReference>
<dbReference type="FunFam" id="1.10.150.20:FF:000034">
    <property type="entry name" value="DNA polymerase I"/>
    <property type="match status" value="1"/>
</dbReference>
<dbReference type="FunFam" id="3.30.420.10:FF:000051">
    <property type="entry name" value="DNA polymerase I"/>
    <property type="match status" value="1"/>
</dbReference>
<dbReference type="Gene3D" id="3.30.70.370">
    <property type="match status" value="1"/>
</dbReference>
<dbReference type="Gene3D" id="1.10.150.20">
    <property type="entry name" value="5' to 3' exonuclease, C-terminal subdomain"/>
    <property type="match status" value="1"/>
</dbReference>
<dbReference type="Gene3D" id="3.30.420.10">
    <property type="entry name" value="Ribonuclease H-like superfamily/Ribonuclease H"/>
    <property type="match status" value="1"/>
</dbReference>
<dbReference type="Gene3D" id="1.20.1060.10">
    <property type="entry name" value="Taq DNA Polymerase, Chain T, domain 4"/>
    <property type="match status" value="1"/>
</dbReference>
<dbReference type="InterPro" id="IPR002562">
    <property type="entry name" value="3'-5'_exonuclease_dom"/>
</dbReference>
<dbReference type="InterPro" id="IPR001098">
    <property type="entry name" value="DNA-dir_DNA_pol_A_palm_dom"/>
</dbReference>
<dbReference type="InterPro" id="IPR043502">
    <property type="entry name" value="DNA/RNA_pol_sf"/>
</dbReference>
<dbReference type="InterPro" id="IPR002298">
    <property type="entry name" value="DNA_polymerase_A"/>
</dbReference>
<dbReference type="InterPro" id="IPR012337">
    <property type="entry name" value="RNaseH-like_sf"/>
</dbReference>
<dbReference type="InterPro" id="IPR036397">
    <property type="entry name" value="RNaseH_sf"/>
</dbReference>
<dbReference type="PANTHER" id="PTHR10133">
    <property type="entry name" value="DNA POLYMERASE I"/>
    <property type="match status" value="1"/>
</dbReference>
<dbReference type="PANTHER" id="PTHR10133:SF53">
    <property type="entry name" value="DNA POLYMERASE I A, CHLOROPLASTIC_MITOCHONDRIAL"/>
    <property type="match status" value="1"/>
</dbReference>
<dbReference type="Pfam" id="PF00476">
    <property type="entry name" value="DNA_pol_A"/>
    <property type="match status" value="2"/>
</dbReference>
<dbReference type="Pfam" id="PF01612">
    <property type="entry name" value="DNA_pol_A_exo1"/>
    <property type="match status" value="1"/>
</dbReference>
<dbReference type="PRINTS" id="PR00868">
    <property type="entry name" value="DNAPOLI"/>
</dbReference>
<dbReference type="SMART" id="SM00482">
    <property type="entry name" value="POLAc"/>
    <property type="match status" value="1"/>
</dbReference>
<dbReference type="SUPFAM" id="SSF56672">
    <property type="entry name" value="DNA/RNA polymerases"/>
    <property type="match status" value="1"/>
</dbReference>
<dbReference type="SUPFAM" id="SSF53098">
    <property type="entry name" value="Ribonuclease H-like"/>
    <property type="match status" value="1"/>
</dbReference>
<organism>
    <name type="scientific">Arabidopsis thaliana</name>
    <name type="common">Mouse-ear cress</name>
    <dbReference type="NCBI Taxonomy" id="3702"/>
    <lineage>
        <taxon>Eukaryota</taxon>
        <taxon>Viridiplantae</taxon>
        <taxon>Streptophyta</taxon>
        <taxon>Embryophyta</taxon>
        <taxon>Tracheophyta</taxon>
        <taxon>Spermatophyta</taxon>
        <taxon>Magnoliopsida</taxon>
        <taxon>eudicotyledons</taxon>
        <taxon>Gunneridae</taxon>
        <taxon>Pentapetalae</taxon>
        <taxon>rosids</taxon>
        <taxon>malvids</taxon>
        <taxon>Brassicales</taxon>
        <taxon>Brassicaceae</taxon>
        <taxon>Camelineae</taxon>
        <taxon>Arabidopsis</taxon>
    </lineage>
</organism>
<name>POLIA_ARATH</name>
<proteinExistence type="evidence at transcript level"/>
<gene>
    <name type="primary">POLIA</name>
    <name type="ordered locus">At1g50840</name>
    <name type="ORF">F8A12.8</name>
</gene>
<accession>F4I6M1</accession>
<accession>Q8W105</accession>
<accession>Q9C6J5</accession>
<sequence length="1050" mass="117234">MAMGVSLTSHNNPLLRHLSPSSSWVSRSSSRLSSSPLPSFLFPCRRTLLQRKLASTDGNVGYCTTTVCQGFQHSVHQRSSSVVFNGEWELRSESNKVRMVPKIIKVGNQTEVAETHQVPGTVSAWREEANKLRERNGQIARNLDDNGYFNGSVPIISSAPSYETSQKIDYEFKPRGTTRSTTATLNKELIGITQSEPVVSLPRKGLDVGDNMDVNPKGEGIQRPLISDKSSGTANGNKNTVAISKVERSTEPSNVRENLGKIYDKVLIVDNVQAAKDTVAKLVNQFRNHVHSCDTEVSGIEVKEETPVDHGELICFSIYCGPEADFGNGKSCIWVDVLGENGREVLAEFKPYFEDSFIRKVWHNYSFDSHIIRNHGIEISGFHADTMHMARLWDSARRIKGGYSLEALTSDPKVLGGTQTKEEAEFLGKISMKTIFGKRKLKKDGSEGKIVVIPPVEELQREDREAWISYSALDAISTLKLYESMTKKLQLMDWHLDGKPVLGRTMLDFYHEFWRPFGELLVKMEAEGILVDREYLAEIEKVAKAEQQVAGSRFRNWASKYCPDAKYMNIGSDTQLRQLFFGGISNSHDEVLPVEKLFKVPNIDKVIEEGKKTPTKFRNIKLHRISDSPLSTENFTASGWPSVGGDVLKELAGKVSAEYDFMDDVSDISLEEVVEDDDVETSETQKSKTDDETDTSAYGTAYVAFGGGERGKEACHAIASLCEVCSIDSLISNFILPLQGSNVSGKDGRVHCSLNINTETGRLSARRPNLQNQPALEKDRYKIRKAFVASPGNTLVVADYGQLELRILAHLTGCKSMMEAFKAGGDFHSRTAMNMYPHVREAVENGQVILEWHPEPGEDKPPVPLLKDAFGSERRKAKMLNFSIAYGKTAVGLSRDWKVSTKEAQETVDLWYNDRQEVRKWQEMRKKEAIEDGYVLTLLGRSRRFPASKSRAQRNHIQRAAINTPVQGSAADVAMCAMLEISINQQLKKLGWRLLLQIHDEVILEGPIESAEIAKDIVVDCMSKPFNGRNILSVDLSVDAKCAQNWYAAK</sequence>
<evidence type="ECO:0000250" key="1"/>
<evidence type="ECO:0000255" key="2"/>
<evidence type="ECO:0000256" key="3">
    <source>
        <dbReference type="SAM" id="MobiDB-lite"/>
    </source>
</evidence>
<evidence type="ECO:0000269" key="4">
    <source>
    </source>
</evidence>
<evidence type="ECO:0000269" key="5">
    <source>
    </source>
</evidence>
<evidence type="ECO:0000269" key="6">
    <source>
    </source>
</evidence>
<evidence type="ECO:0000269" key="7">
    <source>
    </source>
</evidence>
<evidence type="ECO:0000305" key="8"/>
<evidence type="ECO:0000305" key="9">
    <source>
    </source>
</evidence>
<feature type="transit peptide" description="Chloroplast and mitochondrion" evidence="2">
    <location>
        <begin position="1"/>
        <end position="91"/>
    </location>
</feature>
<feature type="chain" id="PRO_0000429309" description="DNA polymerase I A, chloroplastic/mitochondrial">
    <location>
        <begin position="92"/>
        <end position="1050"/>
    </location>
</feature>
<feature type="domain" description="3'-5' exonuclease">
    <location>
        <begin position="312"/>
        <end position="490"/>
    </location>
</feature>
<feature type="region of interest" description="Disordered" evidence="3">
    <location>
        <begin position="202"/>
        <end position="240"/>
    </location>
</feature>
<feature type="region of interest" description="Disordered" evidence="3">
    <location>
        <begin position="673"/>
        <end position="694"/>
    </location>
</feature>
<feature type="region of interest" description="Polymerase">
    <location>
        <begin position="717"/>
        <end position="1048"/>
    </location>
</feature>
<feature type="compositionally biased region" description="Polar residues" evidence="3">
    <location>
        <begin position="228"/>
        <end position="240"/>
    </location>
</feature>
<feature type="sequence conflict" description="In Ref. 1; BAE10873 and 4; AAL58915/AAM13892." evidence="8" ref="1 4">
    <location>
        <position position="79"/>
    </location>
</feature>
<protein>
    <recommendedName>
        <fullName>DNA polymerase I A, chloroplastic/mitochondrial</fullName>
        <ecNumber>2.7.7.7</ecNumber>
    </recommendedName>
    <alternativeName>
        <fullName>DNA polymerase PolI-like B</fullName>
        <shortName>AtPolI-like A</shortName>
    </alternativeName>
    <alternativeName>
        <fullName>Polymerase gamma 2</fullName>
        <shortName>POLGAMMA2</shortName>
    </alternativeName>
</protein>
<reference key="1">
    <citation type="journal article" date="2005" name="Biochem. Biophys. Res. Commun.">
        <title>Plastid DNA polymerases from higher plants, Arabidopsis thaliana.</title>
        <authorList>
            <person name="Mori Y."/>
            <person name="Kimura S."/>
            <person name="Saotome A."/>
            <person name="Kasai N."/>
            <person name="Sakaguchi N."/>
            <person name="Uchiyama Y."/>
            <person name="Ishibashi T."/>
            <person name="Yamamoto T."/>
            <person name="Chiku H."/>
            <person name="Sakaguchi K."/>
        </authorList>
    </citation>
    <scope>NUCLEOTIDE SEQUENCE [MRNA]</scope>
    <scope>SUBCELLULAR LOCATION</scope>
    <scope>TISSUE SPECIFICITY</scope>
</reference>
<reference key="2">
    <citation type="journal article" date="2000" name="Nature">
        <title>Sequence and analysis of chromosome 1 of the plant Arabidopsis thaliana.</title>
        <authorList>
            <person name="Theologis A."/>
            <person name="Ecker J.R."/>
            <person name="Palm C.J."/>
            <person name="Federspiel N.A."/>
            <person name="Kaul S."/>
            <person name="White O."/>
            <person name="Alonso J."/>
            <person name="Altafi H."/>
            <person name="Araujo R."/>
            <person name="Bowman C.L."/>
            <person name="Brooks S.Y."/>
            <person name="Buehler E."/>
            <person name="Chan A."/>
            <person name="Chao Q."/>
            <person name="Chen H."/>
            <person name="Cheuk R.F."/>
            <person name="Chin C.W."/>
            <person name="Chung M.K."/>
            <person name="Conn L."/>
            <person name="Conway A.B."/>
            <person name="Conway A.R."/>
            <person name="Creasy T.H."/>
            <person name="Dewar K."/>
            <person name="Dunn P."/>
            <person name="Etgu P."/>
            <person name="Feldblyum T.V."/>
            <person name="Feng J.-D."/>
            <person name="Fong B."/>
            <person name="Fujii C.Y."/>
            <person name="Gill J.E."/>
            <person name="Goldsmith A.D."/>
            <person name="Haas B."/>
            <person name="Hansen N.F."/>
            <person name="Hughes B."/>
            <person name="Huizar L."/>
            <person name="Hunter J.L."/>
            <person name="Jenkins J."/>
            <person name="Johnson-Hopson C."/>
            <person name="Khan S."/>
            <person name="Khaykin E."/>
            <person name="Kim C.J."/>
            <person name="Koo H.L."/>
            <person name="Kremenetskaia I."/>
            <person name="Kurtz D.B."/>
            <person name="Kwan A."/>
            <person name="Lam B."/>
            <person name="Langin-Hooper S."/>
            <person name="Lee A."/>
            <person name="Lee J.M."/>
            <person name="Lenz C.A."/>
            <person name="Li J.H."/>
            <person name="Li Y.-P."/>
            <person name="Lin X."/>
            <person name="Liu S.X."/>
            <person name="Liu Z.A."/>
            <person name="Luros J.S."/>
            <person name="Maiti R."/>
            <person name="Marziali A."/>
            <person name="Militscher J."/>
            <person name="Miranda M."/>
            <person name="Nguyen M."/>
            <person name="Nierman W.C."/>
            <person name="Osborne B.I."/>
            <person name="Pai G."/>
            <person name="Peterson J."/>
            <person name="Pham P.K."/>
            <person name="Rizzo M."/>
            <person name="Rooney T."/>
            <person name="Rowley D."/>
            <person name="Sakano H."/>
            <person name="Salzberg S.L."/>
            <person name="Schwartz J.R."/>
            <person name="Shinn P."/>
            <person name="Southwick A.M."/>
            <person name="Sun H."/>
            <person name="Tallon L.J."/>
            <person name="Tambunga G."/>
            <person name="Toriumi M.J."/>
            <person name="Town C.D."/>
            <person name="Utterback T."/>
            <person name="Van Aken S."/>
            <person name="Vaysberg M."/>
            <person name="Vysotskaia V.S."/>
            <person name="Walker M."/>
            <person name="Wu D."/>
            <person name="Yu G."/>
            <person name="Fraser C.M."/>
            <person name="Venter J.C."/>
            <person name="Davis R.W."/>
        </authorList>
    </citation>
    <scope>NUCLEOTIDE SEQUENCE [LARGE SCALE GENOMIC DNA]</scope>
    <source>
        <strain>cv. Columbia</strain>
    </source>
</reference>
<reference key="3">
    <citation type="journal article" date="2017" name="Plant J.">
        <title>Araport11: a complete reannotation of the Arabidopsis thaliana reference genome.</title>
        <authorList>
            <person name="Cheng C.Y."/>
            <person name="Krishnakumar V."/>
            <person name="Chan A.P."/>
            <person name="Thibaud-Nissen F."/>
            <person name="Schobel S."/>
            <person name="Town C.D."/>
        </authorList>
    </citation>
    <scope>GENOME REANNOTATION</scope>
    <source>
        <strain>cv. Columbia</strain>
    </source>
</reference>
<reference key="4">
    <citation type="journal article" date="2003" name="Science">
        <title>Empirical analysis of transcriptional activity in the Arabidopsis genome.</title>
        <authorList>
            <person name="Yamada K."/>
            <person name="Lim J."/>
            <person name="Dale J.M."/>
            <person name="Chen H."/>
            <person name="Shinn P."/>
            <person name="Palm C.J."/>
            <person name="Southwick A.M."/>
            <person name="Wu H.C."/>
            <person name="Kim C.J."/>
            <person name="Nguyen M."/>
            <person name="Pham P.K."/>
            <person name="Cheuk R.F."/>
            <person name="Karlin-Newmann G."/>
            <person name="Liu S.X."/>
            <person name="Lam B."/>
            <person name="Sakano H."/>
            <person name="Wu T."/>
            <person name="Yu G."/>
            <person name="Miranda M."/>
            <person name="Quach H.L."/>
            <person name="Tripp M."/>
            <person name="Chang C.H."/>
            <person name="Lee J.M."/>
            <person name="Toriumi M.J."/>
            <person name="Chan M.M."/>
            <person name="Tang C.C."/>
            <person name="Onodera C.S."/>
            <person name="Deng J.M."/>
            <person name="Akiyama K."/>
            <person name="Ansari Y."/>
            <person name="Arakawa T."/>
            <person name="Banh J."/>
            <person name="Banno F."/>
            <person name="Bowser L."/>
            <person name="Brooks S.Y."/>
            <person name="Carninci P."/>
            <person name="Chao Q."/>
            <person name="Choy N."/>
            <person name="Enju A."/>
            <person name="Goldsmith A.D."/>
            <person name="Gurjal M."/>
            <person name="Hansen N.F."/>
            <person name="Hayashizaki Y."/>
            <person name="Johnson-Hopson C."/>
            <person name="Hsuan V.W."/>
            <person name="Iida K."/>
            <person name="Karnes M."/>
            <person name="Khan S."/>
            <person name="Koesema E."/>
            <person name="Ishida J."/>
            <person name="Jiang P.X."/>
            <person name="Jones T."/>
            <person name="Kawai J."/>
            <person name="Kamiya A."/>
            <person name="Meyers C."/>
            <person name="Nakajima M."/>
            <person name="Narusaka M."/>
            <person name="Seki M."/>
            <person name="Sakurai T."/>
            <person name="Satou M."/>
            <person name="Tamse R."/>
            <person name="Vaysberg M."/>
            <person name="Wallender E.K."/>
            <person name="Wong C."/>
            <person name="Yamamura Y."/>
            <person name="Yuan S."/>
            <person name="Shinozaki K."/>
            <person name="Davis R.W."/>
            <person name="Theologis A."/>
            <person name="Ecker J.R."/>
        </authorList>
    </citation>
    <scope>NUCLEOTIDE SEQUENCE [LARGE SCALE MRNA]</scope>
    <source>
        <strain>cv. Columbia</strain>
    </source>
</reference>
<reference key="5">
    <citation type="journal article" date="2003" name="Plant Cell">
        <title>Nuclear genes that encode mitochondrial proteins for DNA and RNA metabolism are clustered in the Arabidopsis genome.</title>
        <authorList>
            <person name="Elo A."/>
            <person name="Lyznik A."/>
            <person name="Gonzalez D.O."/>
            <person name="Kachman S.D."/>
            <person name="Mackenzie S.A."/>
        </authorList>
    </citation>
    <scope>SUBCELLULAR LOCATION</scope>
</reference>
<reference key="6">
    <citation type="journal article" date="2005" name="Plant Cell">
        <title>Dual-domain, dual-targeting organellar protein presequences in Arabidopsis can use non-AUG start codons.</title>
        <authorList>
            <person name="Christensen A.C."/>
            <person name="Lyznik A."/>
            <person name="Mohammed S."/>
            <person name="Elowsky C.G."/>
            <person name="Elo A."/>
            <person name="Yule R."/>
            <person name="Mackenzie S.A."/>
        </authorList>
    </citation>
    <scope>SUBCELLULAR LOCATION</scope>
    <scope>NON-AUG INITIATOR START CODON</scope>
</reference>
<reference key="7">
    <citation type="journal article" date="2011" name="Plant Physiol.">
        <title>Divergent roles for the two PolI-like organelle DNA polymerases of Arabidopsis.</title>
        <authorList>
            <person name="Parent J.S."/>
            <person name="Lepage E."/>
            <person name="Brisson N."/>
        </authorList>
    </citation>
    <scope>FUNCTION</scope>
</reference>
<reference key="8">
    <citation type="journal article" date="2013" name="Physiol. Plantarum">
        <title>Arabidopsis thaliana organellar DNA polymerase IB mutants exhibit reduced mtDNA levels with a decrease in mitochondrial area density.</title>
        <authorList>
            <person name="Cupp J.D."/>
            <person name="Nielsen B.L."/>
        </authorList>
    </citation>
    <scope>FUNCTION</scope>
    <scope>DISRUPTION PHENOTYPE</scope>
</reference>
<comment type="function">
    <text evidence="1 6 7">In addition to polymerase activity, this DNA polymerase exhibits 5'-3' exonuclease activity (By similarity). Required for DNA replication and accumulation in plastids and mitochondria. May be required for DNA repair in both organelles.</text>
</comment>
<comment type="catalytic activity">
    <reaction>
        <text>DNA(n) + a 2'-deoxyribonucleoside 5'-triphosphate = DNA(n+1) + diphosphate</text>
        <dbReference type="Rhea" id="RHEA:22508"/>
        <dbReference type="Rhea" id="RHEA-COMP:17339"/>
        <dbReference type="Rhea" id="RHEA-COMP:17340"/>
        <dbReference type="ChEBI" id="CHEBI:33019"/>
        <dbReference type="ChEBI" id="CHEBI:61560"/>
        <dbReference type="ChEBI" id="CHEBI:173112"/>
        <dbReference type="EC" id="2.7.7.7"/>
    </reaction>
</comment>
<comment type="activity regulation">
    <text evidence="1">Not inhibited by aphidicolin.</text>
</comment>
<comment type="subcellular location">
    <subcellularLocation>
        <location>Plastid</location>
        <location>Chloroplast</location>
    </subcellularLocation>
    <subcellularLocation>
        <location>Mitochondrion</location>
    </subcellularLocation>
    <text evidence="5">Targeted to chloroplast when translation is initiated at the AUG initiator start, and to mitochondrion when it is initiated at a non-canonical CTG leucine codon located 21-bp upstream of the initiator methionine codon.</text>
</comment>
<comment type="tissue specificity">
    <text evidence="4">Expressed in shoot apical meristem.</text>
</comment>
<comment type="disruption phenotype">
    <text evidence="7">Retarded growth and reduced levels of DNA in both mitochondria and plastids. Double homozygous mutants polIa and polIb are sterile.</text>
</comment>
<comment type="similarity">
    <text evidence="8">Belongs to the DNA polymerase type-A family.</text>
</comment>
<comment type="caution">
    <text evidence="9">This sequence can initiate at a non-canonical CTG leucine codon. This non-AUG initiator start codon is located 21-bp upstream of the initiator methionine codon (PubMed:16169894).</text>
</comment>
<comment type="sequence caution" evidence="8">
    <conflict type="erroneous gene model prediction">
        <sequence resource="EMBL-CDS" id="AAG50942"/>
    </conflict>
</comment>
<comment type="sequence caution" evidence="8">
    <conflict type="miscellaneous discrepancy">
        <sequence resource="EMBL-CDS" id="AAG50942"/>
    </conflict>
    <text>Unusual initiator. The initiator methionine is coded by a non-canonical CTG leucine codon.</text>
</comment>
<keyword id="KW-0150">Chloroplast</keyword>
<keyword id="KW-0227">DNA damage</keyword>
<keyword id="KW-0234">DNA repair</keyword>
<keyword id="KW-0235">DNA replication</keyword>
<keyword id="KW-0238">DNA-binding</keyword>
<keyword id="KW-0239">DNA-directed DNA polymerase</keyword>
<keyword id="KW-0269">Exonuclease</keyword>
<keyword id="KW-0378">Hydrolase</keyword>
<keyword id="KW-0496">Mitochondrion</keyword>
<keyword id="KW-0540">Nuclease</keyword>
<keyword id="KW-0548">Nucleotidyltransferase</keyword>
<keyword id="KW-0934">Plastid</keyword>
<keyword id="KW-1185">Reference proteome</keyword>
<keyword id="KW-0808">Transferase</keyword>
<keyword id="KW-0809">Transit peptide</keyword>